<dbReference type="EMBL" id="GANP01002135">
    <property type="protein sequence ID" value="JAB82333.1"/>
    <property type="molecule type" value="mRNA"/>
</dbReference>
<dbReference type="GO" id="GO:0005576">
    <property type="term" value="C:extracellular region"/>
    <property type="evidence" value="ECO:0007669"/>
    <property type="project" value="UniProtKB-SubCell"/>
</dbReference>
<dbReference type="GO" id="GO:0019958">
    <property type="term" value="F:C-X-C chemokine binding"/>
    <property type="evidence" value="ECO:0000314"/>
    <property type="project" value="UniProtKB"/>
</dbReference>
<protein>
    <recommendedName>
        <fullName evidence="6">Evasin P1174</fullName>
    </recommendedName>
</protein>
<proteinExistence type="evidence at transcript level"/>
<evidence type="ECO:0000250" key="1">
    <source>
        <dbReference type="UniProtKB" id="P0C8E8"/>
    </source>
</evidence>
<evidence type="ECO:0000255" key="2"/>
<evidence type="ECO:0000255" key="3">
    <source>
        <dbReference type="PROSITE-ProRule" id="PRU00498"/>
    </source>
</evidence>
<evidence type="ECO:0000256" key="4">
    <source>
        <dbReference type="SAM" id="MobiDB-lite"/>
    </source>
</evidence>
<evidence type="ECO:0000269" key="5">
    <source>
    </source>
</evidence>
<evidence type="ECO:0000303" key="6">
    <source>
    </source>
</evidence>
<evidence type="ECO:0000305" key="7"/>
<evidence type="ECO:0000312" key="8">
    <source>
        <dbReference type="EMBL" id="JAB82333.1"/>
    </source>
</evidence>
<feature type="signal peptide" evidence="2">
    <location>
        <begin position="1" status="less than"/>
        <end position="27"/>
    </location>
</feature>
<feature type="chain" id="PRO_5004736597" description="Evasin P1174" evidence="2">
    <location>
        <begin position="28"/>
        <end position="104"/>
    </location>
</feature>
<feature type="region of interest" description="Disordered" evidence="4">
    <location>
        <begin position="85"/>
        <end position="104"/>
    </location>
</feature>
<feature type="glycosylation site" description="N-linked (GlcNAc...) asparagine" evidence="3">
    <location>
        <position position="43"/>
    </location>
</feature>
<feature type="glycosylation site" description="N-linked (GlcNAc...) asparagine" evidence="3">
    <location>
        <position position="49"/>
    </location>
</feature>
<feature type="glycosylation site" description="N-linked (GlcNAc...) asparagine" evidence="3">
    <location>
        <position position="58"/>
    </location>
</feature>
<feature type="disulfide bond" evidence="1">
    <location>
        <begin position="40"/>
        <end position="59"/>
    </location>
</feature>
<feature type="disulfide bond" evidence="1">
    <location>
        <begin position="44"/>
        <end position="61"/>
    </location>
</feature>
<feature type="disulfide bond" evidence="1">
    <location>
        <begin position="55"/>
        <end position="72"/>
    </location>
</feature>
<feature type="non-terminal residue" evidence="8">
    <location>
        <position position="1"/>
    </location>
</feature>
<name>E1174_IXORI</name>
<accession>V5I3C5</accession>
<reference evidence="8" key="1">
    <citation type="journal article" date="2015" name="Sci. Rep.">
        <title>Tissue- and time-dependent transcription in Ixodes ricinus salivary glands and midguts when blood feeding on the vertebrate host.</title>
        <authorList>
            <person name="Kotsyfakis M."/>
            <person name="Schwarz A."/>
            <person name="Erhart J."/>
            <person name="Ribeiro J.M."/>
        </authorList>
    </citation>
    <scope>NUCLEOTIDE SEQUENCE [LARGE SCALE MRNA]</scope>
</reference>
<reference evidence="7" key="2">
    <citation type="journal article" date="2019" name="J. Biol. Chem.">
        <title>A knottin scaffold directs the CXC-chemokine-binding specificity of tick evasins.</title>
        <authorList>
            <person name="Lee A.W."/>
            <person name="Deruaz M."/>
            <person name="Lynch C."/>
            <person name="Davies G."/>
            <person name="Singh K."/>
            <person name="Alenazi Y."/>
            <person name="Eaton J.R.O."/>
            <person name="Kawamura A."/>
            <person name="Shaw J."/>
            <person name="Proudfoot A.E.I."/>
            <person name="Dias J.M."/>
            <person name="Bhattacharya S."/>
        </authorList>
    </citation>
    <scope>FUNCTION</scope>
</reference>
<keyword id="KW-1015">Disulfide bond</keyword>
<keyword id="KW-0325">Glycoprotein</keyword>
<keyword id="KW-0964">Secreted</keyword>
<keyword id="KW-0732">Signal</keyword>
<comment type="function">
    <text evidence="5">Salivary chemokine-binding protein which binds to host chemokines CXCL1 and CXCL8.</text>
</comment>
<comment type="subcellular location">
    <subcellularLocation>
        <location evidence="7">Secreted</location>
    </subcellularLocation>
</comment>
<sequence>LKTFCLFLQIAVFIALGIQIFLCGTDALNNENELFSVEYCGANCTQQDNGSWTKCKGNCTCYHEDGKRYGLCLSTEYTDFTQFPKPTSEEIADASPRPKETNSH</sequence>
<organism evidence="8">
    <name type="scientific">Ixodes ricinus</name>
    <name type="common">Common tick</name>
    <name type="synonym">Acarus ricinus</name>
    <dbReference type="NCBI Taxonomy" id="34613"/>
    <lineage>
        <taxon>Eukaryota</taxon>
        <taxon>Metazoa</taxon>
        <taxon>Ecdysozoa</taxon>
        <taxon>Arthropoda</taxon>
        <taxon>Chelicerata</taxon>
        <taxon>Arachnida</taxon>
        <taxon>Acari</taxon>
        <taxon>Parasitiformes</taxon>
        <taxon>Ixodida</taxon>
        <taxon>Ixodoidea</taxon>
        <taxon>Ixodidae</taxon>
        <taxon>Ixodinae</taxon>
        <taxon>Ixodes</taxon>
    </lineage>
</organism>